<keyword id="KW-0963">Cytoplasm</keyword>
<keyword id="KW-0227">DNA damage</keyword>
<keyword id="KW-0234">DNA repair</keyword>
<keyword id="KW-0255">Endonuclease</keyword>
<keyword id="KW-0378">Hydrolase</keyword>
<keyword id="KW-0460">Magnesium</keyword>
<keyword id="KW-0479">Metal-binding</keyword>
<keyword id="KW-0540">Nuclease</keyword>
<reference key="1">
    <citation type="journal article" date="2009" name="Proc. Natl. Acad. Sci. U.S.A.">
        <title>Biogeography of the Sulfolobus islandicus pan-genome.</title>
        <authorList>
            <person name="Reno M.L."/>
            <person name="Held N.L."/>
            <person name="Fields C.J."/>
            <person name="Burke P.V."/>
            <person name="Whitaker R.J."/>
        </authorList>
    </citation>
    <scope>NUCLEOTIDE SEQUENCE [LARGE SCALE GENOMIC DNA]</scope>
    <source>
        <strain>M.14.25 / Kamchatka #1</strain>
    </source>
</reference>
<dbReference type="EC" id="3.1.21.7" evidence="1"/>
<dbReference type="EMBL" id="CP001400">
    <property type="protein sequence ID" value="ACP37133.1"/>
    <property type="molecule type" value="Genomic_DNA"/>
</dbReference>
<dbReference type="RefSeq" id="WP_012710418.1">
    <property type="nucleotide sequence ID" value="NC_012588.1"/>
</dbReference>
<dbReference type="SMR" id="C3MU99"/>
<dbReference type="KEGG" id="sia:M1425_0243"/>
<dbReference type="HOGENOM" id="CLU_047631_1_1_2"/>
<dbReference type="Proteomes" id="UP000001350">
    <property type="component" value="Chromosome"/>
</dbReference>
<dbReference type="GO" id="GO:0005737">
    <property type="term" value="C:cytoplasm"/>
    <property type="evidence" value="ECO:0007669"/>
    <property type="project" value="UniProtKB-SubCell"/>
</dbReference>
<dbReference type="GO" id="GO:0043737">
    <property type="term" value="F:deoxyribonuclease V activity"/>
    <property type="evidence" value="ECO:0007669"/>
    <property type="project" value="UniProtKB-UniRule"/>
</dbReference>
<dbReference type="GO" id="GO:0000287">
    <property type="term" value="F:magnesium ion binding"/>
    <property type="evidence" value="ECO:0007669"/>
    <property type="project" value="UniProtKB-UniRule"/>
</dbReference>
<dbReference type="GO" id="GO:0016891">
    <property type="term" value="F:RNA endonuclease activity, producing 5'-phosphomonoesters"/>
    <property type="evidence" value="ECO:0007669"/>
    <property type="project" value="TreeGrafter"/>
</dbReference>
<dbReference type="GO" id="GO:0003727">
    <property type="term" value="F:single-stranded RNA binding"/>
    <property type="evidence" value="ECO:0007669"/>
    <property type="project" value="TreeGrafter"/>
</dbReference>
<dbReference type="GO" id="GO:0006281">
    <property type="term" value="P:DNA repair"/>
    <property type="evidence" value="ECO:0007669"/>
    <property type="project" value="UniProtKB-UniRule"/>
</dbReference>
<dbReference type="CDD" id="cd06559">
    <property type="entry name" value="Endonuclease_V"/>
    <property type="match status" value="1"/>
</dbReference>
<dbReference type="FunFam" id="3.30.2170.10:FF:000006">
    <property type="entry name" value="Endonuclease V"/>
    <property type="match status" value="1"/>
</dbReference>
<dbReference type="Gene3D" id="3.30.2170.10">
    <property type="entry name" value="archaeoglobus fulgidus dsm 4304 superfamily"/>
    <property type="match status" value="1"/>
</dbReference>
<dbReference type="HAMAP" id="MF_00801">
    <property type="entry name" value="Endonuclease_5"/>
    <property type="match status" value="1"/>
</dbReference>
<dbReference type="InterPro" id="IPR007581">
    <property type="entry name" value="Endonuclease-V"/>
</dbReference>
<dbReference type="PANTHER" id="PTHR28511">
    <property type="entry name" value="ENDONUCLEASE V"/>
    <property type="match status" value="1"/>
</dbReference>
<dbReference type="PANTHER" id="PTHR28511:SF1">
    <property type="entry name" value="ENDONUCLEASE V"/>
    <property type="match status" value="1"/>
</dbReference>
<dbReference type="Pfam" id="PF04493">
    <property type="entry name" value="Endonuclease_5"/>
    <property type="match status" value="1"/>
</dbReference>
<sequence>MVEKHLLEFLEKLQFLIAKNVKISHYGIENVKKICGVDIAYKGNLGFSVGVSMDINSGDYNYKSYVGEVNFPYIPGFLFMREAPLMIKAIEGLDCHLLLVDGHGIAHPRKSGIAAVIGVLLDFPTIGVAKSRLTGDLVNESEITYVYLNGEKVGVKFGRYFYSPGNKVDLQDCIELGKRGYPKVLKIADMLTKKIKKE</sequence>
<proteinExistence type="inferred from homology"/>
<organism>
    <name type="scientific">Saccharolobus islandicus (strain M.14.25 / Kamchatka #1)</name>
    <name type="common">Sulfolobus islandicus</name>
    <dbReference type="NCBI Taxonomy" id="427317"/>
    <lineage>
        <taxon>Archaea</taxon>
        <taxon>Thermoproteota</taxon>
        <taxon>Thermoprotei</taxon>
        <taxon>Sulfolobales</taxon>
        <taxon>Sulfolobaceae</taxon>
        <taxon>Saccharolobus</taxon>
    </lineage>
</organism>
<accession>C3MU99</accession>
<feature type="chain" id="PRO_1000212980" description="Endonuclease V">
    <location>
        <begin position="1"/>
        <end position="198"/>
    </location>
</feature>
<feature type="binding site" evidence="1">
    <location>
        <position position="38"/>
    </location>
    <ligand>
        <name>Mg(2+)</name>
        <dbReference type="ChEBI" id="CHEBI:18420"/>
    </ligand>
</feature>
<feature type="binding site" evidence="1">
    <location>
        <position position="101"/>
    </location>
    <ligand>
        <name>Mg(2+)</name>
        <dbReference type="ChEBI" id="CHEBI:18420"/>
    </ligand>
</feature>
<feature type="site" description="Interaction with target DNA" evidence="1">
    <location>
        <position position="73"/>
    </location>
</feature>
<comment type="function">
    <text evidence="1">DNA repair enzyme involved in the repair of deaminated bases. Selectively cleaves double-stranded DNA at the second phosphodiester bond 3' to a deoxyinosine leaving behind the intact lesion on the nicked DNA.</text>
</comment>
<comment type="catalytic activity">
    <reaction evidence="1">
        <text>Endonucleolytic cleavage at apurinic or apyrimidinic sites to products with a 5'-phosphate.</text>
        <dbReference type="EC" id="3.1.21.7"/>
    </reaction>
</comment>
<comment type="cofactor">
    <cofactor evidence="1">
        <name>Mg(2+)</name>
        <dbReference type="ChEBI" id="CHEBI:18420"/>
    </cofactor>
</comment>
<comment type="subcellular location">
    <subcellularLocation>
        <location evidence="1">Cytoplasm</location>
    </subcellularLocation>
</comment>
<comment type="similarity">
    <text evidence="1">Belongs to the endonuclease V family.</text>
</comment>
<name>NFI_SACI4</name>
<gene>
    <name evidence="1" type="primary">nfi</name>
    <name type="ordered locus">M1425_0243</name>
</gene>
<evidence type="ECO:0000255" key="1">
    <source>
        <dbReference type="HAMAP-Rule" id="MF_00801"/>
    </source>
</evidence>
<protein>
    <recommendedName>
        <fullName evidence="1">Endonuclease V</fullName>
        <ecNumber evidence="1">3.1.21.7</ecNumber>
    </recommendedName>
    <alternativeName>
        <fullName evidence="1">Deoxyinosine 3'endonuclease</fullName>
    </alternativeName>
    <alternativeName>
        <fullName evidence="1">Deoxyribonuclease V</fullName>
        <shortName evidence="1">DNase V</shortName>
    </alternativeName>
</protein>